<protein>
    <recommendedName>
        <fullName>Putative cystathionine beta-lyase</fullName>
        <shortName>CBL</shortName>
        <ecNumber>4.4.1.13</ecNumber>
    </recommendedName>
    <alternativeName>
        <fullName>Beta-cystathionase</fullName>
    </alternativeName>
    <alternativeName>
        <fullName>Cysteine lyase</fullName>
    </alternativeName>
    <alternativeName>
        <fullName>Cysteine-S-conjugate beta-lyase</fullName>
    </alternativeName>
    <alternativeName>
        <fullName>Increased recombination centers protein 7</fullName>
    </alternativeName>
</protein>
<dbReference type="EC" id="4.4.1.13"/>
<dbReference type="EMBL" id="D50617">
    <property type="protein sequence ID" value="BAA09295.1"/>
    <property type="molecule type" value="Genomic_DNA"/>
</dbReference>
<dbReference type="EMBL" id="BK006940">
    <property type="protein sequence ID" value="DAA12497.1"/>
    <property type="molecule type" value="Genomic_DNA"/>
</dbReference>
<dbReference type="PIR" id="S56311">
    <property type="entry name" value="S56311"/>
</dbReference>
<dbReference type="RefSeq" id="NP_116714.1">
    <property type="nucleotide sequence ID" value="NM_001180021.1"/>
</dbReference>
<dbReference type="SMR" id="P43623"/>
<dbReference type="BioGRID" id="31212">
    <property type="interactions" value="87"/>
</dbReference>
<dbReference type="DIP" id="DIP-5187N"/>
<dbReference type="FunCoup" id="P43623">
    <property type="interactions" value="207"/>
</dbReference>
<dbReference type="IntAct" id="P43623">
    <property type="interactions" value="1"/>
</dbReference>
<dbReference type="MINT" id="P43623"/>
<dbReference type="STRING" id="4932.YFR055W"/>
<dbReference type="iPTMnet" id="P43623"/>
<dbReference type="PaxDb" id="4932-YFR055W"/>
<dbReference type="PeptideAtlas" id="P43623"/>
<dbReference type="EnsemblFungi" id="YFR055W_mRNA">
    <property type="protein sequence ID" value="YFR055W"/>
    <property type="gene ID" value="YFR055W"/>
</dbReference>
<dbReference type="GeneID" id="850616"/>
<dbReference type="KEGG" id="sce:YFR055W"/>
<dbReference type="AGR" id="SGD:S000001952"/>
<dbReference type="SGD" id="S000001952">
    <property type="gene designation" value="IRC7"/>
</dbReference>
<dbReference type="VEuPathDB" id="FungiDB:YFR055W"/>
<dbReference type="eggNOG" id="KOG0053">
    <property type="taxonomic scope" value="Eukaryota"/>
</dbReference>
<dbReference type="HOGENOM" id="CLU_018986_5_1_1"/>
<dbReference type="InParanoid" id="P43623"/>
<dbReference type="OMA" id="SVTMEFP"/>
<dbReference type="OrthoDB" id="3512640at2759"/>
<dbReference type="BioCyc" id="MetaCyc:YFR055W-MONOMER"/>
<dbReference type="BioCyc" id="YEAST:YFR055W-MONOMER"/>
<dbReference type="BRENDA" id="4.4.1.13">
    <property type="organism ID" value="984"/>
</dbReference>
<dbReference type="UniPathway" id="UPA00051">
    <property type="reaction ID" value="UER00078"/>
</dbReference>
<dbReference type="BioGRID-ORCS" id="850616">
    <property type="hits" value="0 hits in 10 CRISPR screens"/>
</dbReference>
<dbReference type="PRO" id="PR:P43623"/>
<dbReference type="Proteomes" id="UP000002311">
    <property type="component" value="Chromosome VI"/>
</dbReference>
<dbReference type="RNAct" id="P43623">
    <property type="molecule type" value="protein"/>
</dbReference>
<dbReference type="GO" id="GO:0047804">
    <property type="term" value="F:cysteine-S-conjugate beta-lyase activity"/>
    <property type="evidence" value="ECO:0000314"/>
    <property type="project" value="SGD"/>
</dbReference>
<dbReference type="GO" id="GO:0030170">
    <property type="term" value="F:pyridoxal phosphate binding"/>
    <property type="evidence" value="ECO:0007669"/>
    <property type="project" value="InterPro"/>
</dbReference>
<dbReference type="GO" id="GO:0019450">
    <property type="term" value="P:L-cysteine catabolic process to pyruvate"/>
    <property type="evidence" value="ECO:0000314"/>
    <property type="project" value="SGD"/>
</dbReference>
<dbReference type="GO" id="GO:0009086">
    <property type="term" value="P:methionine biosynthetic process"/>
    <property type="evidence" value="ECO:0007669"/>
    <property type="project" value="UniProtKB-KW"/>
</dbReference>
<dbReference type="GO" id="GO:0006790">
    <property type="term" value="P:sulfur compound metabolic process"/>
    <property type="evidence" value="ECO:0000314"/>
    <property type="project" value="SGD"/>
</dbReference>
<dbReference type="GO" id="GO:0019346">
    <property type="term" value="P:transsulfuration"/>
    <property type="evidence" value="ECO:0007669"/>
    <property type="project" value="InterPro"/>
</dbReference>
<dbReference type="FunFam" id="3.40.640.10:FF:000046">
    <property type="entry name" value="Cystathionine gamma-lyase"/>
    <property type="match status" value="1"/>
</dbReference>
<dbReference type="Gene3D" id="3.90.1150.10">
    <property type="entry name" value="Aspartate Aminotransferase, domain 1"/>
    <property type="match status" value="1"/>
</dbReference>
<dbReference type="Gene3D" id="3.40.640.10">
    <property type="entry name" value="Type I PLP-dependent aspartate aminotransferase-like (Major domain)"/>
    <property type="match status" value="1"/>
</dbReference>
<dbReference type="InterPro" id="IPR000277">
    <property type="entry name" value="Cys/Met-Metab_PyrdxlP-dep_enz"/>
</dbReference>
<dbReference type="InterPro" id="IPR006233">
    <property type="entry name" value="Cys_b_lyase_bac"/>
</dbReference>
<dbReference type="InterPro" id="IPR054542">
    <property type="entry name" value="Cys_met_metab_PP"/>
</dbReference>
<dbReference type="InterPro" id="IPR015424">
    <property type="entry name" value="PyrdxlP-dep_Trfase"/>
</dbReference>
<dbReference type="InterPro" id="IPR015421">
    <property type="entry name" value="PyrdxlP-dep_Trfase_major"/>
</dbReference>
<dbReference type="InterPro" id="IPR015422">
    <property type="entry name" value="PyrdxlP-dep_Trfase_small"/>
</dbReference>
<dbReference type="NCBIfam" id="TIGR01324">
    <property type="entry name" value="cysta_beta_ly_B"/>
    <property type="match status" value="1"/>
</dbReference>
<dbReference type="PANTHER" id="PTHR43500">
    <property type="entry name" value="CYSTATHIONINE BETA-LYASE-RELATED"/>
    <property type="match status" value="1"/>
</dbReference>
<dbReference type="PANTHER" id="PTHR43500:SF1">
    <property type="entry name" value="CYSTATHIONINE BETA-LYASE-RELATED"/>
    <property type="match status" value="1"/>
</dbReference>
<dbReference type="Pfam" id="PF01053">
    <property type="entry name" value="Cys_Met_Meta_PP"/>
    <property type="match status" value="1"/>
</dbReference>
<dbReference type="PIRSF" id="PIRSF001434">
    <property type="entry name" value="CGS"/>
    <property type="match status" value="1"/>
</dbReference>
<dbReference type="SUPFAM" id="SSF53383">
    <property type="entry name" value="PLP-dependent transferases"/>
    <property type="match status" value="1"/>
</dbReference>
<dbReference type="PROSITE" id="PS00868">
    <property type="entry name" value="CYS_MET_METAB_PP"/>
    <property type="match status" value="1"/>
</dbReference>
<name>METC_YEAST</name>
<comment type="catalytic activity">
    <reaction>
        <text>L,L-cystathionine + H2O = L-homocysteine + pyruvate + NH4(+)</text>
        <dbReference type="Rhea" id="RHEA:13965"/>
        <dbReference type="ChEBI" id="CHEBI:15361"/>
        <dbReference type="ChEBI" id="CHEBI:15377"/>
        <dbReference type="ChEBI" id="CHEBI:28938"/>
        <dbReference type="ChEBI" id="CHEBI:58161"/>
        <dbReference type="ChEBI" id="CHEBI:58199"/>
    </reaction>
</comment>
<comment type="catalytic activity">
    <reaction>
        <text>an S-substituted L-cysteine + H2O = a thiol + pyruvate + NH4(+)</text>
        <dbReference type="Rhea" id="RHEA:18121"/>
        <dbReference type="ChEBI" id="CHEBI:15361"/>
        <dbReference type="ChEBI" id="CHEBI:15377"/>
        <dbReference type="ChEBI" id="CHEBI:28938"/>
        <dbReference type="ChEBI" id="CHEBI:29256"/>
        <dbReference type="ChEBI" id="CHEBI:58717"/>
        <dbReference type="EC" id="4.4.1.13"/>
    </reaction>
</comment>
<comment type="cofactor">
    <cofactor>
        <name>pyridoxal 5'-phosphate</name>
        <dbReference type="ChEBI" id="CHEBI:597326"/>
    </cofactor>
</comment>
<comment type="pathway">
    <text>Amino-acid biosynthesis; L-methionine biosynthesis via de novo pathway; L-homocysteine from L-cystathionine: step 1/1.</text>
</comment>
<comment type="miscellaneous">
    <text evidence="2">Present with 2610 molecules/cell in log phase SD medium.</text>
</comment>
<comment type="similarity">
    <text evidence="3">Belongs to the trans-sulfuration enzymes family.</text>
</comment>
<gene>
    <name type="primary">IRC7</name>
    <name type="ordered locus">YFR055W</name>
</gene>
<sequence length="340" mass="36971">MIDRTELSKFGITTQLSVIGRNPDEQSGFVNPPLYKGSTIILKKLSDLEQRKGRFYGTAGSPTIDNLENAWTHLTGGAGTVLSASGLGSISLALLALSKAGDHILMTDSVYVPTRMLCDGLLAKFGVETDYYDPSIGKDIEKLVKPNTTVIFLESPGSGTMEVQDIPALVSVAKKHGIKTILDNTWATPLFFDAHAHGIDISVEAGTKYLGGHSDLLIGLASANEECWPLLRSTYDAMAMLPGAEDCQLALRGMRTLHLRLKEVERKALDLAAWLGNRDEVEKVLHPAFEDCPGHEYWVRDYKGSSGLFSIVLKNGFTRAGLEKMVEGMKVLQLGFSWGG</sequence>
<evidence type="ECO:0000250" key="1"/>
<evidence type="ECO:0000269" key="2">
    <source>
    </source>
</evidence>
<evidence type="ECO:0000305" key="3"/>
<accession>P43623</accession>
<accession>D6VTT7</accession>
<keyword id="KW-0028">Amino-acid biosynthesis</keyword>
<keyword id="KW-0456">Lyase</keyword>
<keyword id="KW-0486">Methionine biosynthesis</keyword>
<keyword id="KW-0663">Pyridoxal phosphate</keyword>
<keyword id="KW-1185">Reference proteome</keyword>
<organism>
    <name type="scientific">Saccharomyces cerevisiae (strain ATCC 204508 / S288c)</name>
    <name type="common">Baker's yeast</name>
    <dbReference type="NCBI Taxonomy" id="559292"/>
    <lineage>
        <taxon>Eukaryota</taxon>
        <taxon>Fungi</taxon>
        <taxon>Dikarya</taxon>
        <taxon>Ascomycota</taxon>
        <taxon>Saccharomycotina</taxon>
        <taxon>Saccharomycetes</taxon>
        <taxon>Saccharomycetales</taxon>
        <taxon>Saccharomycetaceae</taxon>
        <taxon>Saccharomyces</taxon>
    </lineage>
</organism>
<proteinExistence type="evidence at protein level"/>
<reference key="1">
    <citation type="journal article" date="1995" name="Nat. Genet.">
        <title>Analysis of the nucleotide sequence of chromosome VI from Saccharomyces cerevisiae.</title>
        <authorList>
            <person name="Murakami Y."/>
            <person name="Naitou M."/>
            <person name="Hagiwara H."/>
            <person name="Shibata T."/>
            <person name="Ozawa M."/>
            <person name="Sasanuma S."/>
            <person name="Sasanuma M."/>
            <person name="Tsuchiya Y."/>
            <person name="Soeda E."/>
            <person name="Yokoyama K."/>
            <person name="Yamazaki M."/>
            <person name="Tashiro H."/>
            <person name="Eki T."/>
        </authorList>
    </citation>
    <scope>NUCLEOTIDE SEQUENCE [LARGE SCALE GENOMIC DNA]</scope>
    <source>
        <strain>ATCC 204508 / S288c</strain>
    </source>
</reference>
<reference key="2">
    <citation type="journal article" date="2014" name="G3 (Bethesda)">
        <title>The reference genome sequence of Saccharomyces cerevisiae: Then and now.</title>
        <authorList>
            <person name="Engel S.R."/>
            <person name="Dietrich F.S."/>
            <person name="Fisk D.G."/>
            <person name="Binkley G."/>
            <person name="Balakrishnan R."/>
            <person name="Costanzo M.C."/>
            <person name="Dwight S.S."/>
            <person name="Hitz B.C."/>
            <person name="Karra K."/>
            <person name="Nash R.S."/>
            <person name="Weng S."/>
            <person name="Wong E.D."/>
            <person name="Lloyd P."/>
            <person name="Skrzypek M.S."/>
            <person name="Miyasato S.R."/>
            <person name="Simison M."/>
            <person name="Cherry J.M."/>
        </authorList>
    </citation>
    <scope>GENOME REANNOTATION</scope>
    <source>
        <strain>ATCC 204508 / S288c</strain>
    </source>
</reference>
<reference key="3">
    <citation type="journal article" date="1996" name="Yeast">
        <title>Analysis of a 36.2 kb DNA sequence including the right telomere of chromosome VI from Saccharomyces cerevisiae.</title>
        <authorList>
            <person name="Eki T."/>
            <person name="Naitou M."/>
            <person name="Hagiwara H."/>
            <person name="Ozawa M."/>
            <person name="Sasanuma S."/>
            <person name="Sasanuma M."/>
            <person name="Tsuchiya Y."/>
            <person name="Shibata T."/>
            <person name="Hanaoka F."/>
            <person name="Murakami Y."/>
        </authorList>
    </citation>
    <scope>NUCLEOTIDE SEQUENCE [GENOMIC DNA]</scope>
    <source>
        <strain>ATCC 204511 / S288c / AB972</strain>
    </source>
</reference>
<reference key="4">
    <citation type="journal article" date="2003" name="Nature">
        <title>Global analysis of protein expression in yeast.</title>
        <authorList>
            <person name="Ghaemmaghami S."/>
            <person name="Huh W.-K."/>
            <person name="Bower K."/>
            <person name="Howson R.W."/>
            <person name="Belle A."/>
            <person name="Dephoure N."/>
            <person name="O'Shea E.K."/>
            <person name="Weissman J.S."/>
        </authorList>
    </citation>
    <scope>LEVEL OF PROTEIN EXPRESSION [LARGE SCALE ANALYSIS]</scope>
</reference>
<feature type="chain" id="PRO_0000114774" description="Putative cystathionine beta-lyase">
    <location>
        <begin position="1"/>
        <end position="340"/>
    </location>
</feature>
<feature type="modified residue" description="N6-(pyridoxal phosphate)lysine" evidence="1">
    <location>
        <position position="208"/>
    </location>
</feature>